<name>GLR12_ARATH</name>
<dbReference type="EMBL" id="AY072064">
    <property type="protein sequence ID" value="AAL61993.1"/>
    <property type="molecule type" value="mRNA"/>
</dbReference>
<dbReference type="EMBL" id="AY072065">
    <property type="protein sequence ID" value="AAL61994.1"/>
    <property type="molecule type" value="mRNA"/>
</dbReference>
<dbReference type="EMBL" id="AB020745">
    <property type="protein sequence ID" value="BAA96960.1"/>
    <property type="molecule type" value="Genomic_DNA"/>
</dbReference>
<dbReference type="EMBL" id="CP002688">
    <property type="protein sequence ID" value="AED95665.1"/>
    <property type="molecule type" value="Genomic_DNA"/>
</dbReference>
<dbReference type="EMBL" id="CP002688">
    <property type="protein sequence ID" value="AED95666.1"/>
    <property type="molecule type" value="Genomic_DNA"/>
</dbReference>
<dbReference type="RefSeq" id="NP_199651.1">
    <molecule id="Q9LV72-1"/>
    <property type="nucleotide sequence ID" value="NM_124215.2"/>
</dbReference>
<dbReference type="RefSeq" id="NP_851155.1">
    <molecule id="Q9LV72-2"/>
    <property type="nucleotide sequence ID" value="NM_180824.2"/>
</dbReference>
<dbReference type="SMR" id="Q9LV72"/>
<dbReference type="BioGRID" id="20141">
    <property type="interactions" value="2"/>
</dbReference>
<dbReference type="FunCoup" id="Q9LV72">
    <property type="interactions" value="179"/>
</dbReference>
<dbReference type="IntAct" id="Q9LV72">
    <property type="interactions" value="1"/>
</dbReference>
<dbReference type="STRING" id="3702.Q9LV72"/>
<dbReference type="GlyCosmos" id="Q9LV72">
    <property type="glycosylation" value="8 sites, No reported glycans"/>
</dbReference>
<dbReference type="GlyGen" id="Q9LV72">
    <property type="glycosylation" value="8 sites"/>
</dbReference>
<dbReference type="PaxDb" id="3702-AT5G48400.2"/>
<dbReference type="ProteomicsDB" id="247361">
    <molecule id="Q9LV72-1"/>
</dbReference>
<dbReference type="EnsemblPlants" id="AT5G48400.1">
    <molecule id="Q9LV72-2"/>
    <property type="protein sequence ID" value="AT5G48400.1"/>
    <property type="gene ID" value="AT5G48400"/>
</dbReference>
<dbReference type="EnsemblPlants" id="AT5G48400.2">
    <molecule id="Q9LV72-1"/>
    <property type="protein sequence ID" value="AT5G48400.2"/>
    <property type="gene ID" value="AT5G48400"/>
</dbReference>
<dbReference type="GeneID" id="834895"/>
<dbReference type="Gramene" id="AT5G48400.1">
    <molecule id="Q9LV72-2"/>
    <property type="protein sequence ID" value="AT5G48400.1"/>
    <property type="gene ID" value="AT5G48400"/>
</dbReference>
<dbReference type="Gramene" id="AT5G48400.2">
    <molecule id="Q9LV72-1"/>
    <property type="protein sequence ID" value="AT5G48400.2"/>
    <property type="gene ID" value="AT5G48400"/>
</dbReference>
<dbReference type="KEGG" id="ath:AT5G48400"/>
<dbReference type="Araport" id="AT5G48400"/>
<dbReference type="TAIR" id="AT5G48400">
    <property type="gene designation" value="ATGLR1.2"/>
</dbReference>
<dbReference type="eggNOG" id="KOG1052">
    <property type="taxonomic scope" value="Eukaryota"/>
</dbReference>
<dbReference type="HOGENOM" id="CLU_007358_0_0_1"/>
<dbReference type="InParanoid" id="Q9LV72"/>
<dbReference type="OMA" id="HQEDIAN"/>
<dbReference type="PhylomeDB" id="Q9LV72"/>
<dbReference type="PRO" id="PR:Q9LV72"/>
<dbReference type="Proteomes" id="UP000006548">
    <property type="component" value="Chromosome 5"/>
</dbReference>
<dbReference type="ExpressionAtlas" id="Q9LV72">
    <property type="expression patterns" value="baseline and differential"/>
</dbReference>
<dbReference type="GO" id="GO:0005886">
    <property type="term" value="C:plasma membrane"/>
    <property type="evidence" value="ECO:0000250"/>
    <property type="project" value="UniProtKB"/>
</dbReference>
<dbReference type="GO" id="GO:0005262">
    <property type="term" value="F:calcium channel activity"/>
    <property type="evidence" value="ECO:0000250"/>
    <property type="project" value="UniProtKB"/>
</dbReference>
<dbReference type="GO" id="GO:0008066">
    <property type="term" value="F:glutamate receptor activity"/>
    <property type="evidence" value="ECO:0000250"/>
    <property type="project" value="UniProtKB"/>
</dbReference>
<dbReference type="GO" id="GO:0015276">
    <property type="term" value="F:ligand-gated monoatomic ion channel activity"/>
    <property type="evidence" value="ECO:0007669"/>
    <property type="project" value="InterPro"/>
</dbReference>
<dbReference type="GO" id="GO:0006816">
    <property type="term" value="P:calcium ion transport"/>
    <property type="evidence" value="ECO:0000250"/>
    <property type="project" value="UniProtKB"/>
</dbReference>
<dbReference type="GO" id="GO:0019722">
    <property type="term" value="P:calcium-mediated signaling"/>
    <property type="evidence" value="ECO:0000250"/>
    <property type="project" value="UniProtKB"/>
</dbReference>
<dbReference type="GO" id="GO:0071230">
    <property type="term" value="P:cellular response to amino acid stimulus"/>
    <property type="evidence" value="ECO:0000250"/>
    <property type="project" value="UniProtKB"/>
</dbReference>
<dbReference type="CDD" id="cd13686">
    <property type="entry name" value="GluR_Plant"/>
    <property type="match status" value="1"/>
</dbReference>
<dbReference type="CDD" id="cd19990">
    <property type="entry name" value="PBP1_GABAb_receptor_plant"/>
    <property type="match status" value="1"/>
</dbReference>
<dbReference type="FunFam" id="1.10.287.70:FF:000037">
    <property type="entry name" value="Glutamate receptor"/>
    <property type="match status" value="1"/>
</dbReference>
<dbReference type="FunFam" id="3.40.50.2300:FF:000693">
    <property type="entry name" value="Glutamate receptor 1.2"/>
    <property type="match status" value="1"/>
</dbReference>
<dbReference type="FunFam" id="3.40.50.2300:FF:000629">
    <property type="entry name" value="Glutamate receptor 1.3"/>
    <property type="match status" value="1"/>
</dbReference>
<dbReference type="Gene3D" id="1.10.287.70">
    <property type="match status" value="1"/>
</dbReference>
<dbReference type="Gene3D" id="3.40.50.2300">
    <property type="match status" value="3"/>
</dbReference>
<dbReference type="Gene3D" id="3.40.190.10">
    <property type="entry name" value="Periplasmic binding protein-like II"/>
    <property type="match status" value="3"/>
</dbReference>
<dbReference type="InterPro" id="IPR001828">
    <property type="entry name" value="ANF_lig-bd_rcpt"/>
</dbReference>
<dbReference type="InterPro" id="IPR044440">
    <property type="entry name" value="GABAb_receptor_plant_PBP1"/>
</dbReference>
<dbReference type="InterPro" id="IPR015683">
    <property type="entry name" value="Ionotropic_Glu_rcpt"/>
</dbReference>
<dbReference type="InterPro" id="IPR001320">
    <property type="entry name" value="Iontro_rcpt_C"/>
</dbReference>
<dbReference type="InterPro" id="IPR017103">
    <property type="entry name" value="Iontropic_Glu_rcpt_pln"/>
</dbReference>
<dbReference type="InterPro" id="IPR028082">
    <property type="entry name" value="Peripla_BP_I"/>
</dbReference>
<dbReference type="InterPro" id="IPR001638">
    <property type="entry name" value="Solute-binding_3/MltF_N"/>
</dbReference>
<dbReference type="PANTHER" id="PTHR18966">
    <property type="entry name" value="IONOTROPIC GLUTAMATE RECEPTOR"/>
    <property type="match status" value="1"/>
</dbReference>
<dbReference type="Pfam" id="PF01094">
    <property type="entry name" value="ANF_receptor"/>
    <property type="match status" value="1"/>
</dbReference>
<dbReference type="Pfam" id="PF00060">
    <property type="entry name" value="Lig_chan"/>
    <property type="match status" value="1"/>
</dbReference>
<dbReference type="Pfam" id="PF00497">
    <property type="entry name" value="SBP_bac_3"/>
    <property type="match status" value="1"/>
</dbReference>
<dbReference type="PIRSF" id="PIRSF037090">
    <property type="entry name" value="Iontro_Glu-like_rcpt_pln"/>
    <property type="match status" value="1"/>
</dbReference>
<dbReference type="SMART" id="SM00079">
    <property type="entry name" value="PBPe"/>
    <property type="match status" value="1"/>
</dbReference>
<dbReference type="SUPFAM" id="SSF53822">
    <property type="entry name" value="Periplasmic binding protein-like I"/>
    <property type="match status" value="1"/>
</dbReference>
<dbReference type="SUPFAM" id="SSF53850">
    <property type="entry name" value="Periplasmic binding protein-like II"/>
    <property type="match status" value="1"/>
</dbReference>
<comment type="function">
    <text>Glutamate-gated receptor that probably acts as a non-selective cation channel. May be involved in light-signal transduction and calcium homeostasis via the regulation of calcium influx into cells.</text>
</comment>
<comment type="subunit">
    <text evidence="1">May form heteromers.</text>
</comment>
<comment type="subcellular location">
    <subcellularLocation>
        <location>Membrane</location>
        <topology>Multi-pass membrane protein</topology>
    </subcellularLocation>
</comment>
<comment type="alternative products">
    <event type="alternative splicing"/>
    <isoform>
        <id>Q9LV72-1</id>
        <name>1</name>
        <name>GLR1.2a</name>
        <sequence type="displayed"/>
    </isoform>
    <isoform>
        <id>Q9LV72-2</id>
        <name>2</name>
        <name>GLR1.2b</name>
        <sequence type="described" ref="VSP_009217 VSP_009218"/>
    </isoform>
</comment>
<comment type="tissue specificity">
    <text evidence="3">Expressed predominantly in roots and siliques.</text>
</comment>
<comment type="miscellaneous">
    <molecule>Isoform 2</molecule>
    <text evidence="5">May be due to an intron retention.</text>
</comment>
<comment type="similarity">
    <text evidence="5">Belongs to the glutamate-gated ion channel (TC 1.A.10.1) family.</text>
</comment>
<protein>
    <recommendedName>
        <fullName>Glutamate receptor 1.2</fullName>
    </recommendedName>
    <alternativeName>
        <fullName>Ligand-gated ion channel 1.2</fullName>
    </alternativeName>
</protein>
<keyword id="KW-0025">Alternative splicing</keyword>
<keyword id="KW-0325">Glycoprotein</keyword>
<keyword id="KW-0407">Ion channel</keyword>
<keyword id="KW-0406">Ion transport</keyword>
<keyword id="KW-1071">Ligand-gated ion channel</keyword>
<keyword id="KW-0472">Membrane</keyword>
<keyword id="KW-0675">Receptor</keyword>
<keyword id="KW-1185">Reference proteome</keyword>
<keyword id="KW-0732">Signal</keyword>
<keyword id="KW-0812">Transmembrane</keyword>
<keyword id="KW-1133">Transmembrane helix</keyword>
<keyword id="KW-0813">Transport</keyword>
<proteinExistence type="evidence at transcript level"/>
<sequence length="867" mass="98152">MVRICIQTPILLSFLLVLLFFISNCFASSQNNDDDKRIRVRVGLVLDLGSVEGKIVRSSVSMALSDFYDNHNDYKTRLSLLVRDSHGEPLLALDSVVDLLQTEGVQAIIGGNSLLEAKLLAELGEKARVPVISLNSPMSLSLSKYTHLIQATHNSASEVKGITAFLHGFDWNSVALVLEDHDDWRESMHFMVDHFHENNVHVQSKVAFSVTSSEDSLMDRLRELKDLGTTVFVVHLSEVIATRLFPCAEKLGMMGEGFAWILTSRSMSSFHDQFIDDLTKEAMEGVVGFKSYIPMSKELHNFTLRWRKTLPVEEVTGSEITRLSISGVWAHDVAWSLASAAEVTRMPTVTSTLLEAIKESRFKGLSGNFQLDDMKLLSDKFEIVNMIGSGERRVGFWNSNGSFSNRRQLSSTHDNLETIIWPGGSAQSPKGRSLRESGRKKLRVLVTSSNRFPRLMKVETDPITHEITIVEGFCIEVFQASIAPFNYEVEYIRWLNGTNYTKLAYALHSQKDKYDAAVGDITITSDRSMYVDFTLPYTEMGLGIVAAKERSMWVFFQPLTPNLWITSAAFFVLTGIIVWLIERAENKEFQGSWPQQIGVVIWFGFSTLVYAHREKLQHNLSRFVVTVWVFAVLILVTSYTATLTSMMTVQQIRFNANEDYVGHLSGSLIANAALTNSSLRAMRLLGLNTSEDYAQALMNKSVSYIVSELPYLKILLGENPGHFLMVKTQSTTNGFGFMFQKGSELAPNVSREIAKLRTSERLNEMERRWFDKQLPYTTDDTSNPITLYRFRGLFMITGVSFAFALAVLLILWLRERWEILVNSVNIYFSQRLRHFRILFTRTIHPSPLGLDNPIGENAVQMAQRNRR</sequence>
<organism>
    <name type="scientific">Arabidopsis thaliana</name>
    <name type="common">Mouse-ear cress</name>
    <dbReference type="NCBI Taxonomy" id="3702"/>
    <lineage>
        <taxon>Eukaryota</taxon>
        <taxon>Viridiplantae</taxon>
        <taxon>Streptophyta</taxon>
        <taxon>Embryophyta</taxon>
        <taxon>Tracheophyta</taxon>
        <taxon>Spermatophyta</taxon>
        <taxon>Magnoliopsida</taxon>
        <taxon>eudicotyledons</taxon>
        <taxon>Gunneridae</taxon>
        <taxon>Pentapetalae</taxon>
        <taxon>rosids</taxon>
        <taxon>malvids</taxon>
        <taxon>Brassicales</taxon>
        <taxon>Brassicaceae</taxon>
        <taxon>Camelineae</taxon>
        <taxon>Arabidopsis</taxon>
    </lineage>
</organism>
<feature type="signal peptide" evidence="2">
    <location>
        <begin position="1"/>
        <end position="27"/>
    </location>
</feature>
<feature type="chain" id="PRO_0000011593" description="Glutamate receptor 1.2">
    <location>
        <begin position="28"/>
        <end position="867"/>
    </location>
</feature>
<feature type="topological domain" description="Extracellular" evidence="2">
    <location>
        <begin position="28"/>
        <end position="560"/>
    </location>
</feature>
<feature type="transmembrane region" description="Helical" evidence="2">
    <location>
        <begin position="561"/>
        <end position="581"/>
    </location>
</feature>
<feature type="topological domain" description="Cytoplasmic" evidence="2">
    <location>
        <begin position="582"/>
        <end position="590"/>
    </location>
</feature>
<feature type="transmembrane region" description="Helical" evidence="2">
    <location>
        <begin position="591"/>
        <end position="611"/>
    </location>
</feature>
<feature type="topological domain" description="Cytoplasmic" evidence="2">
    <location>
        <begin position="612"/>
        <end position="622"/>
    </location>
</feature>
<feature type="transmembrane region" description="Helical" evidence="2">
    <location>
        <begin position="623"/>
        <end position="643"/>
    </location>
</feature>
<feature type="topological domain" description="Extracellular" evidence="2">
    <location>
        <begin position="644"/>
        <end position="792"/>
    </location>
</feature>
<feature type="transmembrane region" description="Helical" evidence="2">
    <location>
        <begin position="793"/>
        <end position="813"/>
    </location>
</feature>
<feature type="topological domain" description="Cytoplasmic" evidence="2">
    <location>
        <begin position="814"/>
        <end position="867"/>
    </location>
</feature>
<feature type="glycosylation site" description="N-linked (GlcNAc...) asparagine" evidence="2">
    <location>
        <position position="301"/>
    </location>
</feature>
<feature type="glycosylation site" description="N-linked (GlcNAc...) asparagine" evidence="2">
    <location>
        <position position="400"/>
    </location>
</feature>
<feature type="glycosylation site" description="N-linked (GlcNAc...) asparagine" evidence="2">
    <location>
        <position position="496"/>
    </location>
</feature>
<feature type="glycosylation site" description="N-linked (GlcNAc...) asparagine" evidence="2">
    <location>
        <position position="499"/>
    </location>
</feature>
<feature type="glycosylation site" description="N-linked (GlcNAc...) asparagine" evidence="2">
    <location>
        <position position="676"/>
    </location>
</feature>
<feature type="glycosylation site" description="N-linked (GlcNAc...) asparagine" evidence="2">
    <location>
        <position position="688"/>
    </location>
</feature>
<feature type="glycosylation site" description="N-linked (GlcNAc...) asparagine" evidence="2">
    <location>
        <position position="699"/>
    </location>
</feature>
<feature type="glycosylation site" description="N-linked (GlcNAc...) asparagine" evidence="2">
    <location>
        <position position="748"/>
    </location>
</feature>
<feature type="splice variant" id="VSP_009217" description="In isoform 2." evidence="4">
    <original>MFQKGSELAPNVS</original>
    <variation>VCILLLHHQLLYS</variation>
    <location>
        <begin position="738"/>
        <end position="750"/>
    </location>
</feature>
<feature type="splice variant" id="VSP_009218" description="In isoform 2." evidence="4">
    <location>
        <begin position="751"/>
        <end position="867"/>
    </location>
</feature>
<accession>Q9LV72</accession>
<accession>Q8LGN3</accession>
<gene>
    <name type="primary">GLR1.2</name>
    <name type="ordered locus">At5g48400</name>
    <name type="ORF">MJE7.3</name>
</gene>
<evidence type="ECO:0000250" key="1"/>
<evidence type="ECO:0000255" key="2"/>
<evidence type="ECO:0000269" key="3">
    <source>
    </source>
</evidence>
<evidence type="ECO:0000303" key="4">
    <source>
    </source>
</evidence>
<evidence type="ECO:0000305" key="5"/>
<reference key="1">
    <citation type="journal article" date="2002" name="Mol. Biol. Evol.">
        <title>Phylogenetic and expression analysis of the glutamate-receptor-like gene family in Arabidopsis thaliana.</title>
        <authorList>
            <person name="Chiu J.C."/>
            <person name="Brenner E.D."/>
            <person name="DeSalle R."/>
            <person name="Nitabach M.N."/>
            <person name="Holmes T.C."/>
            <person name="Coruzzi G.M."/>
        </authorList>
    </citation>
    <scope>NUCLEOTIDE SEQUENCE [MRNA] (ISOFORMS 1 AND 2)</scope>
    <scope>TISSUE SPECIFICITY</scope>
    <source>
        <strain>cv. Columbia</strain>
    </source>
</reference>
<reference key="2">
    <citation type="journal article" date="2000" name="DNA Res.">
        <title>Structural analysis of Arabidopsis thaliana chromosome 5. X. Sequence features of the regions of 3,076,755 bp covered by sixty P1 and TAC clones.</title>
        <authorList>
            <person name="Sato S."/>
            <person name="Nakamura Y."/>
            <person name="Kaneko T."/>
            <person name="Katoh T."/>
            <person name="Asamizu E."/>
            <person name="Kotani H."/>
            <person name="Tabata S."/>
        </authorList>
    </citation>
    <scope>NUCLEOTIDE SEQUENCE [LARGE SCALE GENOMIC DNA]</scope>
    <source>
        <strain>cv. Columbia</strain>
    </source>
</reference>
<reference key="3">
    <citation type="journal article" date="2017" name="Plant J.">
        <title>Araport11: a complete reannotation of the Arabidopsis thaliana reference genome.</title>
        <authorList>
            <person name="Cheng C.Y."/>
            <person name="Krishnakumar V."/>
            <person name="Chan A.P."/>
            <person name="Thibaud-Nissen F."/>
            <person name="Schobel S."/>
            <person name="Town C.D."/>
        </authorList>
    </citation>
    <scope>GENOME REANNOTATION</scope>
    <source>
        <strain>cv. Columbia</strain>
    </source>
</reference>
<reference key="4">
    <citation type="journal article" date="2001" name="Science">
        <title>The identity of plant glutamate receptors.</title>
        <authorList>
            <person name="Lacombe B."/>
            <person name="Becker D."/>
            <person name="Hedrich R."/>
            <person name="DeSalle R."/>
            <person name="Hollmann M."/>
            <person name="Kwak J.M."/>
            <person name="Schroeder J.I."/>
            <person name="Le Novere N."/>
            <person name="Nam H.G."/>
            <person name="Spalding E.P."/>
            <person name="Tester M."/>
            <person name="Turano F.J."/>
            <person name="Chiu J."/>
            <person name="Coruzzi G."/>
        </authorList>
    </citation>
    <scope>GENE FAMILY</scope>
    <scope>NOMENCLATURE</scope>
</reference>